<evidence type="ECO:0000255" key="1">
    <source>
        <dbReference type="HAMAP-Rule" id="MF_00405"/>
    </source>
</evidence>
<comment type="function">
    <text evidence="1">Necessary for the introduction of cis unsaturation into fatty acids. Catalyzes the dehydration of (3R)-3-hydroxydecanoyl-ACP to E-(2)-decenoyl-ACP and then its isomerization to Z-(3)-decenoyl-ACP. Can catalyze the dehydratase reaction for beta-hydroxyacyl-ACPs with saturated chain lengths up to 16:0, being most active on intermediate chain length.</text>
</comment>
<comment type="catalytic activity">
    <reaction evidence="1">
        <text>a (3R)-hydroxyacyl-[ACP] = a (2E)-enoyl-[ACP] + H2O</text>
        <dbReference type="Rhea" id="RHEA:13097"/>
        <dbReference type="Rhea" id="RHEA-COMP:9925"/>
        <dbReference type="Rhea" id="RHEA-COMP:9945"/>
        <dbReference type="ChEBI" id="CHEBI:15377"/>
        <dbReference type="ChEBI" id="CHEBI:78784"/>
        <dbReference type="ChEBI" id="CHEBI:78827"/>
        <dbReference type="EC" id="4.2.1.59"/>
    </reaction>
</comment>
<comment type="catalytic activity">
    <reaction evidence="1">
        <text>(3R)-hydroxydecanoyl-[ACP] = (2E)-decenoyl-[ACP] + H2O</text>
        <dbReference type="Rhea" id="RHEA:41860"/>
        <dbReference type="Rhea" id="RHEA-COMP:9638"/>
        <dbReference type="Rhea" id="RHEA-COMP:9639"/>
        <dbReference type="ChEBI" id="CHEBI:15377"/>
        <dbReference type="ChEBI" id="CHEBI:78466"/>
        <dbReference type="ChEBI" id="CHEBI:78467"/>
    </reaction>
</comment>
<comment type="catalytic activity">
    <reaction evidence="1">
        <text>(2E)-decenoyl-[ACP] = (3Z)-decenoyl-[ACP]</text>
        <dbReference type="Rhea" id="RHEA:23568"/>
        <dbReference type="Rhea" id="RHEA-COMP:9639"/>
        <dbReference type="Rhea" id="RHEA-COMP:9927"/>
        <dbReference type="ChEBI" id="CHEBI:78467"/>
        <dbReference type="ChEBI" id="CHEBI:78798"/>
        <dbReference type="EC" id="5.3.3.14"/>
    </reaction>
</comment>
<comment type="pathway">
    <text evidence="1">Lipid metabolism; fatty acid biosynthesis.</text>
</comment>
<comment type="subunit">
    <text evidence="1">Homodimer.</text>
</comment>
<comment type="subcellular location">
    <subcellularLocation>
        <location evidence="1">Cytoplasm</location>
    </subcellularLocation>
</comment>
<comment type="similarity">
    <text evidence="1">Belongs to the thioester dehydratase family. FabA subfamily.</text>
</comment>
<name>FABA_XANOM</name>
<sequence length="171" mass="18993">MTRQSAYSRDQLLASARGELFAPDSGRLPNDPMLMFDRITEISDTGGAHGKGVIRAELDIRPDLWFFGCHFIGDPVMPGCLGLDAMWQLTGFFLTWIGAQGRGRALGCGEVKFTGQVLPSAQLVRYEIDVSRVINRKLVMAQTDARMLVDGREIYVAKDLRVGMFTSTENF</sequence>
<accession>Q2P7N0</accession>
<keyword id="KW-0963">Cytoplasm</keyword>
<keyword id="KW-0275">Fatty acid biosynthesis</keyword>
<keyword id="KW-0276">Fatty acid metabolism</keyword>
<keyword id="KW-0413">Isomerase</keyword>
<keyword id="KW-0444">Lipid biosynthesis</keyword>
<keyword id="KW-0443">Lipid metabolism</keyword>
<keyword id="KW-0456">Lyase</keyword>
<protein>
    <recommendedName>
        <fullName evidence="1">3-hydroxydecanoyl-[acyl-carrier-protein] dehydratase</fullName>
        <ecNumber evidence="1">4.2.1.59</ecNumber>
    </recommendedName>
    <alternativeName>
        <fullName evidence="1">3-hydroxyacyl-[acyl-carrier-protein] dehydratase FabA</fullName>
    </alternativeName>
    <alternativeName>
        <fullName evidence="1">Beta-hydroxydecanoyl thioester dehydrase</fullName>
    </alternativeName>
    <alternativeName>
        <fullName evidence="1">Trans-2-decenoyl-[acyl-carrier-protein] isomerase</fullName>
        <ecNumber evidence="1">5.3.3.14</ecNumber>
    </alternativeName>
</protein>
<reference key="1">
    <citation type="journal article" date="2005" name="Jpn. Agric. Res. Q.">
        <title>Genome sequence of Xanthomonas oryzae pv. oryzae suggests contribution of large numbers of effector genes and insertion sequences to its race diversity.</title>
        <authorList>
            <person name="Ochiai H."/>
            <person name="Inoue Y."/>
            <person name="Takeya M."/>
            <person name="Sasaki A."/>
            <person name="Kaku H."/>
        </authorList>
    </citation>
    <scope>NUCLEOTIDE SEQUENCE [LARGE SCALE GENOMIC DNA]</scope>
    <source>
        <strain>MAFF 311018</strain>
    </source>
</reference>
<organism>
    <name type="scientific">Xanthomonas oryzae pv. oryzae (strain MAFF 311018)</name>
    <dbReference type="NCBI Taxonomy" id="342109"/>
    <lineage>
        <taxon>Bacteria</taxon>
        <taxon>Pseudomonadati</taxon>
        <taxon>Pseudomonadota</taxon>
        <taxon>Gammaproteobacteria</taxon>
        <taxon>Lysobacterales</taxon>
        <taxon>Lysobacteraceae</taxon>
        <taxon>Xanthomonas</taxon>
    </lineage>
</organism>
<gene>
    <name evidence="1" type="primary">fabA</name>
    <name type="ordered locus">XOO0692</name>
</gene>
<feature type="chain" id="PRO_0000267763" description="3-hydroxydecanoyl-[acyl-carrier-protein] dehydratase">
    <location>
        <begin position="1"/>
        <end position="171"/>
    </location>
</feature>
<feature type="active site" evidence="1">
    <location>
        <position position="70"/>
    </location>
</feature>
<dbReference type="EC" id="4.2.1.59" evidence="1"/>
<dbReference type="EC" id="5.3.3.14" evidence="1"/>
<dbReference type="EMBL" id="AP008229">
    <property type="protein sequence ID" value="BAE67447.1"/>
    <property type="molecule type" value="Genomic_DNA"/>
</dbReference>
<dbReference type="RefSeq" id="WP_011407593.1">
    <property type="nucleotide sequence ID" value="NC_007705.1"/>
</dbReference>
<dbReference type="SMR" id="Q2P7N0"/>
<dbReference type="KEGG" id="xom:XOO0692"/>
<dbReference type="HOGENOM" id="CLU_097925_0_0_6"/>
<dbReference type="UniPathway" id="UPA00094"/>
<dbReference type="GO" id="GO:0005737">
    <property type="term" value="C:cytoplasm"/>
    <property type="evidence" value="ECO:0007669"/>
    <property type="project" value="UniProtKB-SubCell"/>
</dbReference>
<dbReference type="GO" id="GO:0019171">
    <property type="term" value="F:(3R)-hydroxyacyl-[acyl-carrier-protein] dehydratase activity"/>
    <property type="evidence" value="ECO:0007669"/>
    <property type="project" value="UniProtKB-UniRule"/>
</dbReference>
<dbReference type="GO" id="GO:0034017">
    <property type="term" value="F:trans-2-decenoyl-acyl-carrier-protein isomerase activity"/>
    <property type="evidence" value="ECO:0007669"/>
    <property type="project" value="UniProtKB-UniRule"/>
</dbReference>
<dbReference type="GO" id="GO:0006636">
    <property type="term" value="P:unsaturated fatty acid biosynthetic process"/>
    <property type="evidence" value="ECO:0007669"/>
    <property type="project" value="UniProtKB-UniRule"/>
</dbReference>
<dbReference type="CDD" id="cd01287">
    <property type="entry name" value="FabA"/>
    <property type="match status" value="1"/>
</dbReference>
<dbReference type="Gene3D" id="3.10.129.10">
    <property type="entry name" value="Hotdog Thioesterase"/>
    <property type="match status" value="1"/>
</dbReference>
<dbReference type="HAMAP" id="MF_00405">
    <property type="entry name" value="FabA"/>
    <property type="match status" value="1"/>
</dbReference>
<dbReference type="InterPro" id="IPR010083">
    <property type="entry name" value="FabA"/>
</dbReference>
<dbReference type="InterPro" id="IPR013114">
    <property type="entry name" value="FabA_FabZ"/>
</dbReference>
<dbReference type="InterPro" id="IPR029069">
    <property type="entry name" value="HotDog_dom_sf"/>
</dbReference>
<dbReference type="NCBIfam" id="TIGR01749">
    <property type="entry name" value="fabA"/>
    <property type="match status" value="1"/>
</dbReference>
<dbReference type="NCBIfam" id="NF003509">
    <property type="entry name" value="PRK05174.1"/>
    <property type="match status" value="1"/>
</dbReference>
<dbReference type="PANTHER" id="PTHR30272">
    <property type="entry name" value="3-HYDROXYACYL-[ACYL-CARRIER-PROTEIN] DEHYDRATASE"/>
    <property type="match status" value="1"/>
</dbReference>
<dbReference type="PANTHER" id="PTHR30272:SF8">
    <property type="entry name" value="3-HYDROXYDECANOYL-[ACYL-CARRIER-PROTEIN] DEHYDRATASE"/>
    <property type="match status" value="1"/>
</dbReference>
<dbReference type="Pfam" id="PF07977">
    <property type="entry name" value="FabA"/>
    <property type="match status" value="1"/>
</dbReference>
<dbReference type="SUPFAM" id="SSF54637">
    <property type="entry name" value="Thioesterase/thiol ester dehydrase-isomerase"/>
    <property type="match status" value="1"/>
</dbReference>
<proteinExistence type="inferred from homology"/>